<proteinExistence type="inferred from homology"/>
<protein>
    <recommendedName>
        <fullName evidence="1">Acyl-[acyl-carrier-protein]--UDP-N-acetylglucosamine O-acyltransferase</fullName>
        <shortName evidence="1">UDP-N-acetylglucosamine acyltransferase</shortName>
        <ecNumber evidence="1">2.3.1.129</ecNumber>
    </recommendedName>
</protein>
<reference key="1">
    <citation type="journal article" date="2008" name="Foodborne Pathog. Dis.">
        <title>The complete genome sequence and analysis of the human pathogen Campylobacter lari.</title>
        <authorList>
            <person name="Miller W.G."/>
            <person name="Wang G."/>
            <person name="Binnewies T.T."/>
            <person name="Parker C.T."/>
        </authorList>
    </citation>
    <scope>NUCLEOTIDE SEQUENCE [LARGE SCALE GENOMIC DNA]</scope>
    <source>
        <strain>RM2100 / D67 / ATCC BAA-1060</strain>
    </source>
</reference>
<keyword id="KW-0012">Acyltransferase</keyword>
<keyword id="KW-0963">Cytoplasm</keyword>
<keyword id="KW-0441">Lipid A biosynthesis</keyword>
<keyword id="KW-0444">Lipid biosynthesis</keyword>
<keyword id="KW-0443">Lipid metabolism</keyword>
<keyword id="KW-1185">Reference proteome</keyword>
<keyword id="KW-0677">Repeat</keyword>
<keyword id="KW-0808">Transferase</keyword>
<accession>B9KDS6</accession>
<comment type="function">
    <text evidence="1">Involved in the biosynthesis of lipid A, a phosphorylated glycolipid that anchors the lipopolysaccharide to the outer membrane of the cell.</text>
</comment>
<comment type="catalytic activity">
    <reaction evidence="1">
        <text>a (3R)-hydroxyacyl-[ACP] + UDP-N-acetyl-alpha-D-glucosamine = a UDP-3-O-[(3R)-3-hydroxyacyl]-N-acetyl-alpha-D-glucosamine + holo-[ACP]</text>
        <dbReference type="Rhea" id="RHEA:67812"/>
        <dbReference type="Rhea" id="RHEA-COMP:9685"/>
        <dbReference type="Rhea" id="RHEA-COMP:9945"/>
        <dbReference type="ChEBI" id="CHEBI:57705"/>
        <dbReference type="ChEBI" id="CHEBI:64479"/>
        <dbReference type="ChEBI" id="CHEBI:78827"/>
        <dbReference type="ChEBI" id="CHEBI:173225"/>
        <dbReference type="EC" id="2.3.1.129"/>
    </reaction>
</comment>
<comment type="pathway">
    <text evidence="1">Glycolipid biosynthesis; lipid IV(A) biosynthesis; lipid IV(A) from (3R)-3-hydroxytetradecanoyl-[acyl-carrier-protein] and UDP-N-acetyl-alpha-D-glucosamine: step 1/6.</text>
</comment>
<comment type="subunit">
    <text evidence="1">Homotrimer.</text>
</comment>
<comment type="subcellular location">
    <subcellularLocation>
        <location evidence="1">Cytoplasm</location>
    </subcellularLocation>
</comment>
<comment type="similarity">
    <text evidence="1">Belongs to the transferase hexapeptide repeat family. LpxA subfamily.</text>
</comment>
<sequence length="263" mass="28409">MSKIHPSAVVEDGAIIGDEVIIEAYSFVGANAKIGNNVVIKQGARILPNVKIGDDSKIFSYAIVGDIPQDISYKDEINSGVIIGKNATIREFVTINSGTAKGDGYTRIGDNAFIMAYSHIAHDCILGNNIILANNATLAGHVELGDYTVVGGLTPIHQFVKVGEGCMIAGASALSQDIVPFCLAEGNRASIRSLNLVGLRRRFDKEEIDILSKTFKILFKQGNLKDNALNLLESTSSENVKKMCNFILETKRGIPIYKEKNHG</sequence>
<evidence type="ECO:0000255" key="1">
    <source>
        <dbReference type="HAMAP-Rule" id="MF_00387"/>
    </source>
</evidence>
<feature type="chain" id="PRO_1000134381" description="Acyl-[acyl-carrier-protein]--UDP-N-acetylglucosamine O-acyltransferase">
    <location>
        <begin position="1"/>
        <end position="263"/>
    </location>
</feature>
<gene>
    <name evidence="1" type="primary">lpxA</name>
    <name type="ordered locus">Cla_1399</name>
</gene>
<dbReference type="EC" id="2.3.1.129" evidence="1"/>
<dbReference type="EMBL" id="CP000932">
    <property type="protein sequence ID" value="ACM64714.1"/>
    <property type="molecule type" value="Genomic_DNA"/>
</dbReference>
<dbReference type="RefSeq" id="WP_012662097.1">
    <property type="nucleotide sequence ID" value="NC_012039.1"/>
</dbReference>
<dbReference type="SMR" id="B9KDS6"/>
<dbReference type="STRING" id="306263.Cla_1399"/>
<dbReference type="KEGG" id="cla:CLA_1399"/>
<dbReference type="PATRIC" id="fig|306263.5.peg.1385"/>
<dbReference type="eggNOG" id="COG1043">
    <property type="taxonomic scope" value="Bacteria"/>
</dbReference>
<dbReference type="HOGENOM" id="CLU_061249_0_0_7"/>
<dbReference type="UniPathway" id="UPA00359">
    <property type="reaction ID" value="UER00477"/>
</dbReference>
<dbReference type="Proteomes" id="UP000007727">
    <property type="component" value="Chromosome"/>
</dbReference>
<dbReference type="GO" id="GO:0005737">
    <property type="term" value="C:cytoplasm"/>
    <property type="evidence" value="ECO:0007669"/>
    <property type="project" value="UniProtKB-SubCell"/>
</dbReference>
<dbReference type="GO" id="GO:0016020">
    <property type="term" value="C:membrane"/>
    <property type="evidence" value="ECO:0007669"/>
    <property type="project" value="GOC"/>
</dbReference>
<dbReference type="GO" id="GO:0008780">
    <property type="term" value="F:acyl-[acyl-carrier-protein]-UDP-N-acetylglucosamine O-acyltransferase activity"/>
    <property type="evidence" value="ECO:0007669"/>
    <property type="project" value="UniProtKB-UniRule"/>
</dbReference>
<dbReference type="GO" id="GO:0009245">
    <property type="term" value="P:lipid A biosynthetic process"/>
    <property type="evidence" value="ECO:0007669"/>
    <property type="project" value="UniProtKB-UniRule"/>
</dbReference>
<dbReference type="CDD" id="cd03351">
    <property type="entry name" value="LbH_UDP-GlcNAc_AT"/>
    <property type="match status" value="1"/>
</dbReference>
<dbReference type="Gene3D" id="2.160.10.10">
    <property type="entry name" value="Hexapeptide repeat proteins"/>
    <property type="match status" value="1"/>
</dbReference>
<dbReference type="Gene3D" id="1.20.1180.10">
    <property type="entry name" value="Udp N-acetylglucosamine O-acyltransferase, C-terminal domain"/>
    <property type="match status" value="1"/>
</dbReference>
<dbReference type="HAMAP" id="MF_00387">
    <property type="entry name" value="LpxA"/>
    <property type="match status" value="1"/>
</dbReference>
<dbReference type="InterPro" id="IPR029098">
    <property type="entry name" value="Acetyltransf_C"/>
</dbReference>
<dbReference type="InterPro" id="IPR037157">
    <property type="entry name" value="Acetyltransf_C_sf"/>
</dbReference>
<dbReference type="InterPro" id="IPR001451">
    <property type="entry name" value="Hexapep"/>
</dbReference>
<dbReference type="InterPro" id="IPR018357">
    <property type="entry name" value="Hexapep_transf_CS"/>
</dbReference>
<dbReference type="InterPro" id="IPR010137">
    <property type="entry name" value="Lipid_A_LpxA"/>
</dbReference>
<dbReference type="InterPro" id="IPR011004">
    <property type="entry name" value="Trimer_LpxA-like_sf"/>
</dbReference>
<dbReference type="NCBIfam" id="TIGR01852">
    <property type="entry name" value="lipid_A_lpxA"/>
    <property type="match status" value="1"/>
</dbReference>
<dbReference type="NCBIfam" id="NF003657">
    <property type="entry name" value="PRK05289.1"/>
    <property type="match status" value="1"/>
</dbReference>
<dbReference type="PANTHER" id="PTHR43480">
    <property type="entry name" value="ACYL-[ACYL-CARRIER-PROTEIN]--UDP-N-ACETYLGLUCOSAMINE O-ACYLTRANSFERASE"/>
    <property type="match status" value="1"/>
</dbReference>
<dbReference type="PANTHER" id="PTHR43480:SF1">
    <property type="entry name" value="ACYL-[ACYL-CARRIER-PROTEIN]--UDP-N-ACETYLGLUCOSAMINE O-ACYLTRANSFERASE, MITOCHONDRIAL-RELATED"/>
    <property type="match status" value="1"/>
</dbReference>
<dbReference type="Pfam" id="PF13720">
    <property type="entry name" value="Acetyltransf_11"/>
    <property type="match status" value="1"/>
</dbReference>
<dbReference type="Pfam" id="PF00132">
    <property type="entry name" value="Hexapep"/>
    <property type="match status" value="2"/>
</dbReference>
<dbReference type="PIRSF" id="PIRSF000456">
    <property type="entry name" value="UDP-GlcNAc_acltr"/>
    <property type="match status" value="1"/>
</dbReference>
<dbReference type="SUPFAM" id="SSF51161">
    <property type="entry name" value="Trimeric LpxA-like enzymes"/>
    <property type="match status" value="1"/>
</dbReference>
<dbReference type="PROSITE" id="PS00101">
    <property type="entry name" value="HEXAPEP_TRANSFERASES"/>
    <property type="match status" value="2"/>
</dbReference>
<name>LPXA_CAMLR</name>
<organism>
    <name type="scientific">Campylobacter lari (strain RM2100 / D67 / ATCC BAA-1060)</name>
    <dbReference type="NCBI Taxonomy" id="306263"/>
    <lineage>
        <taxon>Bacteria</taxon>
        <taxon>Pseudomonadati</taxon>
        <taxon>Campylobacterota</taxon>
        <taxon>Epsilonproteobacteria</taxon>
        <taxon>Campylobacterales</taxon>
        <taxon>Campylobacteraceae</taxon>
        <taxon>Campylobacter</taxon>
    </lineage>
</organism>